<organism>
    <name type="scientific">Citrifermentans bemidjiense (strain ATCC BAA-1014 / DSM 16622 / JCM 12645 / Bem)</name>
    <name type="common">Geobacter bemidjiensis</name>
    <dbReference type="NCBI Taxonomy" id="404380"/>
    <lineage>
        <taxon>Bacteria</taxon>
        <taxon>Pseudomonadati</taxon>
        <taxon>Thermodesulfobacteriota</taxon>
        <taxon>Desulfuromonadia</taxon>
        <taxon>Geobacterales</taxon>
        <taxon>Geobacteraceae</taxon>
        <taxon>Citrifermentans</taxon>
    </lineage>
</organism>
<evidence type="ECO:0000255" key="1">
    <source>
        <dbReference type="HAMAP-Rule" id="MF_00064"/>
    </source>
</evidence>
<protein>
    <recommendedName>
        <fullName evidence="1">Sulfate adenylyltransferase subunit 2</fullName>
        <ecNumber evidence="1">2.7.7.4</ecNumber>
    </recommendedName>
    <alternativeName>
        <fullName evidence="1">ATP-sulfurylase small subunit</fullName>
    </alternativeName>
    <alternativeName>
        <fullName evidence="1">Sulfate adenylate transferase</fullName>
        <shortName evidence="1">SAT</shortName>
    </alternativeName>
</protein>
<name>CYSD_CITBB</name>
<comment type="function">
    <text evidence="1">With CysN forms the ATP sulfurylase (ATPS) that catalyzes the adenylation of sulfate producing adenosine 5'-phosphosulfate (APS) and diphosphate, the first enzymatic step in sulfur assimilation pathway. APS synthesis involves the formation of a high-energy phosphoric-sulfuric acid anhydride bond driven by GTP hydrolysis by CysN coupled to ATP hydrolysis by CysD.</text>
</comment>
<comment type="catalytic activity">
    <reaction evidence="1">
        <text>sulfate + ATP + H(+) = adenosine 5'-phosphosulfate + diphosphate</text>
        <dbReference type="Rhea" id="RHEA:18133"/>
        <dbReference type="ChEBI" id="CHEBI:15378"/>
        <dbReference type="ChEBI" id="CHEBI:16189"/>
        <dbReference type="ChEBI" id="CHEBI:30616"/>
        <dbReference type="ChEBI" id="CHEBI:33019"/>
        <dbReference type="ChEBI" id="CHEBI:58243"/>
        <dbReference type="EC" id="2.7.7.4"/>
    </reaction>
</comment>
<comment type="pathway">
    <text evidence="1">Sulfur metabolism; hydrogen sulfide biosynthesis; sulfite from sulfate: step 1/3.</text>
</comment>
<comment type="subunit">
    <text evidence="1">Heterodimer composed of CysD, the smaller subunit, and CysN.</text>
</comment>
<comment type="similarity">
    <text evidence="1">Belongs to the PAPS reductase family. CysD subfamily.</text>
</comment>
<proteinExistence type="inferred from homology"/>
<reference key="1">
    <citation type="submission" date="2008-07" db="EMBL/GenBank/DDBJ databases">
        <title>Complete sequence of Geobacter bemidjiensis BEM.</title>
        <authorList>
            <consortium name="US DOE Joint Genome Institute"/>
            <person name="Lucas S."/>
            <person name="Copeland A."/>
            <person name="Lapidus A."/>
            <person name="Glavina del Rio T."/>
            <person name="Dalin E."/>
            <person name="Tice H."/>
            <person name="Bruce D."/>
            <person name="Goodwin L."/>
            <person name="Pitluck S."/>
            <person name="Kiss H."/>
            <person name="Brettin T."/>
            <person name="Detter J.C."/>
            <person name="Han C."/>
            <person name="Kuske C.R."/>
            <person name="Schmutz J."/>
            <person name="Larimer F."/>
            <person name="Land M."/>
            <person name="Hauser L."/>
            <person name="Kyrpides N."/>
            <person name="Lykidis A."/>
            <person name="Lovley D."/>
            <person name="Richardson P."/>
        </authorList>
    </citation>
    <scope>NUCLEOTIDE SEQUENCE [LARGE SCALE GENOMIC DNA]</scope>
    <source>
        <strain>ATCC BAA-1014 / DSM 16622 / JCM 12645 / Bem</strain>
    </source>
</reference>
<accession>B5EF56</accession>
<gene>
    <name evidence="1" type="primary">cysD</name>
    <name type="ordered locus">Gbem_2353</name>
</gene>
<keyword id="KW-0067">ATP-binding</keyword>
<keyword id="KW-0547">Nucleotide-binding</keyword>
<keyword id="KW-0548">Nucleotidyltransferase</keyword>
<keyword id="KW-1185">Reference proteome</keyword>
<keyword id="KW-0808">Transferase</keyword>
<feature type="chain" id="PRO_1000092205" description="Sulfate adenylyltransferase subunit 2">
    <location>
        <begin position="1"/>
        <end position="301"/>
    </location>
</feature>
<dbReference type="EC" id="2.7.7.4" evidence="1"/>
<dbReference type="EMBL" id="CP001124">
    <property type="protein sequence ID" value="ACH39365.1"/>
    <property type="molecule type" value="Genomic_DNA"/>
</dbReference>
<dbReference type="RefSeq" id="WP_012530787.1">
    <property type="nucleotide sequence ID" value="NC_011146.1"/>
</dbReference>
<dbReference type="SMR" id="B5EF56"/>
<dbReference type="STRING" id="404380.Gbem_2353"/>
<dbReference type="KEGG" id="gbm:Gbem_2353"/>
<dbReference type="eggNOG" id="COG0175">
    <property type="taxonomic scope" value="Bacteria"/>
</dbReference>
<dbReference type="HOGENOM" id="CLU_043026_0_0_7"/>
<dbReference type="OrthoDB" id="9772604at2"/>
<dbReference type="UniPathway" id="UPA00140">
    <property type="reaction ID" value="UER00204"/>
</dbReference>
<dbReference type="Proteomes" id="UP000008825">
    <property type="component" value="Chromosome"/>
</dbReference>
<dbReference type="GO" id="GO:0005524">
    <property type="term" value="F:ATP binding"/>
    <property type="evidence" value="ECO:0007669"/>
    <property type="project" value="UniProtKB-KW"/>
</dbReference>
<dbReference type="GO" id="GO:0004781">
    <property type="term" value="F:sulfate adenylyltransferase (ATP) activity"/>
    <property type="evidence" value="ECO:0007669"/>
    <property type="project" value="UniProtKB-UniRule"/>
</dbReference>
<dbReference type="GO" id="GO:0070814">
    <property type="term" value="P:hydrogen sulfide biosynthetic process"/>
    <property type="evidence" value="ECO:0007669"/>
    <property type="project" value="UniProtKB-UniRule"/>
</dbReference>
<dbReference type="GO" id="GO:0000103">
    <property type="term" value="P:sulfate assimilation"/>
    <property type="evidence" value="ECO:0007669"/>
    <property type="project" value="UniProtKB-UniRule"/>
</dbReference>
<dbReference type="CDD" id="cd23946">
    <property type="entry name" value="Sulfate_adenylyltransferase_2"/>
    <property type="match status" value="1"/>
</dbReference>
<dbReference type="FunFam" id="3.40.50.620:FF:000002">
    <property type="entry name" value="Sulfate adenylyltransferase subunit 2"/>
    <property type="match status" value="1"/>
</dbReference>
<dbReference type="Gene3D" id="3.40.50.620">
    <property type="entry name" value="HUPs"/>
    <property type="match status" value="1"/>
</dbReference>
<dbReference type="HAMAP" id="MF_00064">
    <property type="entry name" value="Sulf_adenylyltr_sub2"/>
    <property type="match status" value="1"/>
</dbReference>
<dbReference type="InterPro" id="IPR002500">
    <property type="entry name" value="PAPS_reduct_dom"/>
</dbReference>
<dbReference type="InterPro" id="IPR014729">
    <property type="entry name" value="Rossmann-like_a/b/a_fold"/>
</dbReference>
<dbReference type="InterPro" id="IPR011784">
    <property type="entry name" value="SO4_adenylTrfase_ssu"/>
</dbReference>
<dbReference type="InterPro" id="IPR050128">
    <property type="entry name" value="Sulfate_adenylyltrnsfr_sub2"/>
</dbReference>
<dbReference type="NCBIfam" id="TIGR02039">
    <property type="entry name" value="CysD"/>
    <property type="match status" value="1"/>
</dbReference>
<dbReference type="NCBIfam" id="NF003587">
    <property type="entry name" value="PRK05253.1"/>
    <property type="match status" value="1"/>
</dbReference>
<dbReference type="NCBIfam" id="NF009214">
    <property type="entry name" value="PRK12563.1"/>
    <property type="match status" value="1"/>
</dbReference>
<dbReference type="PANTHER" id="PTHR43196">
    <property type="entry name" value="SULFATE ADENYLYLTRANSFERASE SUBUNIT 2"/>
    <property type="match status" value="1"/>
</dbReference>
<dbReference type="PANTHER" id="PTHR43196:SF1">
    <property type="entry name" value="SULFATE ADENYLYLTRANSFERASE SUBUNIT 2"/>
    <property type="match status" value="1"/>
</dbReference>
<dbReference type="Pfam" id="PF01507">
    <property type="entry name" value="PAPS_reduct"/>
    <property type="match status" value="1"/>
</dbReference>
<dbReference type="PIRSF" id="PIRSF002936">
    <property type="entry name" value="CysDAde_trans"/>
    <property type="match status" value="1"/>
</dbReference>
<dbReference type="SUPFAM" id="SSF52402">
    <property type="entry name" value="Adenine nucleotide alpha hydrolases-like"/>
    <property type="match status" value="1"/>
</dbReference>
<sequence>MTTQLTHLQQLEAESIHIIREVVAEFDNPVMLYSIGKDSAVMLHLARKAFYPAPPPFPLLHVDTTWKFREMIQFRGRMAKESGMELLVHVNEDGVKRGVSPFTHGSALYTDVMKTEGLKQALDHYKFDAAFGGARRDEEKSRAKERIFSFRSANHRWDPKNQRPELWSLYNTRIKPGESIRVFPLSNWTELDIWQYIHLEQIPIVPLYYAAVRPVVERDGMLIMVDDDRLELKPGEKVEQKSVRFRTLGCYPLTGAVESEADTLPEIIQEMLLTRTSERQGRLIDHDQAGSMEKKKQEGYF</sequence>